<accession>Q4IBD0</accession>
<accession>A0A098DZ47</accession>
<accession>A0A0E0SJN1</accession>
<accession>I1RNB0</accession>
<accession>V6RB05</accession>
<organism>
    <name type="scientific">Gibberella zeae (strain ATCC MYA-4620 / CBS 123657 / FGSC 9075 / NRRL 31084 / PH-1)</name>
    <name type="common">Wheat head blight fungus</name>
    <name type="synonym">Fusarium graminearum</name>
    <dbReference type="NCBI Taxonomy" id="229533"/>
    <lineage>
        <taxon>Eukaryota</taxon>
        <taxon>Fungi</taxon>
        <taxon>Dikarya</taxon>
        <taxon>Ascomycota</taxon>
        <taxon>Pezizomycotina</taxon>
        <taxon>Sordariomycetes</taxon>
        <taxon>Hypocreomycetidae</taxon>
        <taxon>Hypocreales</taxon>
        <taxon>Nectriaceae</taxon>
        <taxon>Fusarium</taxon>
    </lineage>
</organism>
<comment type="function">
    <text evidence="1">Required for proper folding and/or the stability of a subset of proteins in the endoplasmic reticulum. Component of glycosylphosphatidylinositol-mannosyltransferase 1 which transfers the first of the 4 mannoses in the GPI-anchor precursors during GPI-anchor biosynthesis. Probably acts by stabilizing the mannosyltransferase GPI14 (By similarity).</text>
</comment>
<comment type="pathway">
    <text>Glycolipid biosynthesis; glycosylphosphatidylinositol-anchor biosynthesis.</text>
</comment>
<comment type="subcellular location">
    <subcellularLocation>
        <location evidence="1">Endoplasmic reticulum membrane</location>
        <topology evidence="1">Single-pass type III membrane protein</topology>
    </subcellularLocation>
</comment>
<comment type="similarity">
    <text evidence="3">Belongs to the PIGX family.</text>
</comment>
<gene>
    <name type="primary">PBN1</name>
    <name type="ORF">FGRRES_05478</name>
    <name type="ORF">FGSG_05478</name>
</gene>
<keyword id="KW-0256">Endoplasmic reticulum</keyword>
<keyword id="KW-0325">Glycoprotein</keyword>
<keyword id="KW-0337">GPI-anchor biosynthesis</keyword>
<keyword id="KW-0472">Membrane</keyword>
<keyword id="KW-1185">Reference proteome</keyword>
<keyword id="KW-0812">Transmembrane</keyword>
<keyword id="KW-1133">Transmembrane helix</keyword>
<protein>
    <recommendedName>
        <fullName>Protein PBN1</fullName>
    </recommendedName>
</protein>
<dbReference type="EMBL" id="DS231665">
    <property type="protein sequence ID" value="ESU11444.1"/>
    <property type="molecule type" value="Genomic_DNA"/>
</dbReference>
<dbReference type="EMBL" id="HG970334">
    <property type="protein sequence ID" value="CEF86644.1"/>
    <property type="molecule type" value="Genomic_DNA"/>
</dbReference>
<dbReference type="RefSeq" id="XP_011324020.1">
    <property type="nucleotide sequence ID" value="XM_011325718.1"/>
</dbReference>
<dbReference type="STRING" id="229533.Q4IBD0"/>
<dbReference type="GlyCosmos" id="Q4IBD0">
    <property type="glycosylation" value="2 sites, No reported glycans"/>
</dbReference>
<dbReference type="GeneID" id="23552659"/>
<dbReference type="KEGG" id="fgr:FGSG_05478"/>
<dbReference type="VEuPathDB" id="FungiDB:FGRAMPH1_01G18013"/>
<dbReference type="eggNOG" id="ENOG502QS8N">
    <property type="taxonomic scope" value="Eukaryota"/>
</dbReference>
<dbReference type="HOGENOM" id="CLU_030047_0_0_1"/>
<dbReference type="InParanoid" id="Q4IBD0"/>
<dbReference type="OrthoDB" id="38113at110618"/>
<dbReference type="UniPathway" id="UPA00196"/>
<dbReference type="Proteomes" id="UP000070720">
    <property type="component" value="Chromosome 3"/>
</dbReference>
<dbReference type="GO" id="GO:0005789">
    <property type="term" value="C:endoplasmic reticulum membrane"/>
    <property type="evidence" value="ECO:0007669"/>
    <property type="project" value="UniProtKB-SubCell"/>
</dbReference>
<dbReference type="GO" id="GO:1990529">
    <property type="term" value="C:glycosylphosphatidylinositol-mannosyltransferase I complex"/>
    <property type="evidence" value="ECO:0007669"/>
    <property type="project" value="TreeGrafter"/>
</dbReference>
<dbReference type="GO" id="GO:0000030">
    <property type="term" value="F:mannosyltransferase activity"/>
    <property type="evidence" value="ECO:0007669"/>
    <property type="project" value="TreeGrafter"/>
</dbReference>
<dbReference type="GO" id="GO:0006506">
    <property type="term" value="P:GPI anchor biosynthetic process"/>
    <property type="evidence" value="ECO:0007669"/>
    <property type="project" value="UniProtKB-UniPathway"/>
</dbReference>
<dbReference type="InterPro" id="IPR042322">
    <property type="entry name" value="Pbn1"/>
</dbReference>
<dbReference type="InterPro" id="IPR013233">
    <property type="entry name" value="PIG-X/PBN1"/>
</dbReference>
<dbReference type="PANTHER" id="PTHR28533">
    <property type="entry name" value="PROTEIN PBN1"/>
    <property type="match status" value="1"/>
</dbReference>
<dbReference type="PANTHER" id="PTHR28533:SF1">
    <property type="entry name" value="PROTEIN PBN1"/>
    <property type="match status" value="1"/>
</dbReference>
<dbReference type="Pfam" id="PF08320">
    <property type="entry name" value="PIG-X"/>
    <property type="match status" value="1"/>
</dbReference>
<dbReference type="SMART" id="SM00780">
    <property type="entry name" value="PIG-X"/>
    <property type="match status" value="1"/>
</dbReference>
<sequence>MRERVTFIHNDYSLDPEALDNQDAGLLGPQIETVRQDKLTIPFGELPSELTDILQEYEALHIRWASPVKSETMDPFTSRISPGLHVYATPVLPSSCNPTKLCSWLQRFGPLDCSKPEAFTEFQQSTSTSPSFSFYEALEDLHSFITTSSQEFCPELDSVCNARLRSLLTASGLDLSFDKAANALVVSALWPLRPQTVAVPASSARRVEVGIFINDRSQPNMKENELGVAGVLSVLGDQKKPSPTIFTFPARHRRDGSVFTSKFLTPTGLHPTLQLSFNSNKLPSADGECAPYAFLTLPKTIFADRYQLGDELFLASKNLTALRYTTLPVDLEAPAYTTETWGSSILLGLAPPDPGTEKPWSVEIPLHLRYLKPSATGQVEIEIPYPAVFWACSSEEGTLESPFDRLHVGYDYLFPRDTVFWHANPQPENGSRLMNRVTVPVLDDDGVGSIRSGTAIAVAIGFAWVMWKLVSVMLKSDRAPAGVTKETKQKKSH</sequence>
<reference key="1">
    <citation type="journal article" date="2007" name="Science">
        <title>The Fusarium graminearum genome reveals a link between localized polymorphism and pathogen specialization.</title>
        <authorList>
            <person name="Cuomo C.A."/>
            <person name="Gueldener U."/>
            <person name="Xu J.-R."/>
            <person name="Trail F."/>
            <person name="Turgeon B.G."/>
            <person name="Di Pietro A."/>
            <person name="Walton J.D."/>
            <person name="Ma L.-J."/>
            <person name="Baker S.E."/>
            <person name="Rep M."/>
            <person name="Adam G."/>
            <person name="Antoniw J."/>
            <person name="Baldwin T."/>
            <person name="Calvo S.E."/>
            <person name="Chang Y.-L."/>
            <person name="DeCaprio D."/>
            <person name="Gale L.R."/>
            <person name="Gnerre S."/>
            <person name="Goswami R.S."/>
            <person name="Hammond-Kosack K."/>
            <person name="Harris L.J."/>
            <person name="Hilburn K."/>
            <person name="Kennell J.C."/>
            <person name="Kroken S."/>
            <person name="Magnuson J.K."/>
            <person name="Mannhaupt G."/>
            <person name="Mauceli E.W."/>
            <person name="Mewes H.-W."/>
            <person name="Mitterbauer R."/>
            <person name="Muehlbauer G."/>
            <person name="Muensterkoetter M."/>
            <person name="Nelson D."/>
            <person name="O'Donnell K."/>
            <person name="Ouellet T."/>
            <person name="Qi W."/>
            <person name="Quesneville H."/>
            <person name="Roncero M.I.G."/>
            <person name="Seong K.-Y."/>
            <person name="Tetko I.V."/>
            <person name="Urban M."/>
            <person name="Waalwijk C."/>
            <person name="Ward T.J."/>
            <person name="Yao J."/>
            <person name="Birren B.W."/>
            <person name="Kistler H.C."/>
        </authorList>
    </citation>
    <scope>NUCLEOTIDE SEQUENCE [LARGE SCALE GENOMIC DNA]</scope>
    <source>
        <strain>ATCC MYA-4620 / CBS 123657 / FGSC 9075 / NRRL 31084 / PH-1</strain>
    </source>
</reference>
<reference key="2">
    <citation type="journal article" date="2010" name="Nature">
        <title>Comparative genomics reveals mobile pathogenicity chromosomes in Fusarium.</title>
        <authorList>
            <person name="Ma L.-J."/>
            <person name="van der Does H.C."/>
            <person name="Borkovich K.A."/>
            <person name="Coleman J.J."/>
            <person name="Daboussi M.-J."/>
            <person name="Di Pietro A."/>
            <person name="Dufresne M."/>
            <person name="Freitag M."/>
            <person name="Grabherr M."/>
            <person name="Henrissat B."/>
            <person name="Houterman P.M."/>
            <person name="Kang S."/>
            <person name="Shim W.-B."/>
            <person name="Woloshuk C."/>
            <person name="Xie X."/>
            <person name="Xu J.-R."/>
            <person name="Antoniw J."/>
            <person name="Baker S.E."/>
            <person name="Bluhm B.H."/>
            <person name="Breakspear A."/>
            <person name="Brown D.W."/>
            <person name="Butchko R.A.E."/>
            <person name="Chapman S."/>
            <person name="Coulson R."/>
            <person name="Coutinho P.M."/>
            <person name="Danchin E.G.J."/>
            <person name="Diener A."/>
            <person name="Gale L.R."/>
            <person name="Gardiner D.M."/>
            <person name="Goff S."/>
            <person name="Hammond-Kosack K.E."/>
            <person name="Hilburn K."/>
            <person name="Hua-Van A."/>
            <person name="Jonkers W."/>
            <person name="Kazan K."/>
            <person name="Kodira C.D."/>
            <person name="Koehrsen M."/>
            <person name="Kumar L."/>
            <person name="Lee Y.-H."/>
            <person name="Li L."/>
            <person name="Manners J.M."/>
            <person name="Miranda-Saavedra D."/>
            <person name="Mukherjee M."/>
            <person name="Park G."/>
            <person name="Park J."/>
            <person name="Park S.-Y."/>
            <person name="Proctor R.H."/>
            <person name="Regev A."/>
            <person name="Ruiz-Roldan M.C."/>
            <person name="Sain D."/>
            <person name="Sakthikumar S."/>
            <person name="Sykes S."/>
            <person name="Schwartz D.C."/>
            <person name="Turgeon B.G."/>
            <person name="Wapinski I."/>
            <person name="Yoder O."/>
            <person name="Young S."/>
            <person name="Zeng Q."/>
            <person name="Zhou S."/>
            <person name="Galagan J."/>
            <person name="Cuomo C.A."/>
            <person name="Kistler H.C."/>
            <person name="Rep M."/>
        </authorList>
    </citation>
    <scope>GENOME REANNOTATION</scope>
    <source>
        <strain>ATCC MYA-4620 / CBS 123657 / FGSC 9075 / NRRL 31084 / PH-1</strain>
    </source>
</reference>
<reference key="3">
    <citation type="journal article" date="2015" name="BMC Genomics">
        <title>The completed genome sequence of the pathogenic ascomycete fungus Fusarium graminearum.</title>
        <authorList>
            <person name="King R."/>
            <person name="Urban M."/>
            <person name="Hammond-Kosack M.C.U."/>
            <person name="Hassani-Pak K."/>
            <person name="Hammond-Kosack K.E."/>
        </authorList>
    </citation>
    <scope>NUCLEOTIDE SEQUENCE [LARGE SCALE GENOMIC DNA]</scope>
    <source>
        <strain>ATCC MYA-4620 / CBS 123657 / FGSC 9075 / NRRL 31084 / PH-1</strain>
    </source>
</reference>
<proteinExistence type="inferred from homology"/>
<feature type="chain" id="PRO_0000246305" description="Protein PBN1">
    <location>
        <begin position="1"/>
        <end position="493"/>
    </location>
</feature>
<feature type="topological domain" description="Lumenal" evidence="2">
    <location>
        <begin position="1"/>
        <end position="453"/>
    </location>
</feature>
<feature type="transmembrane region" description="Helical" evidence="2">
    <location>
        <begin position="454"/>
        <end position="474"/>
    </location>
</feature>
<feature type="topological domain" description="Cytoplasmic" evidence="2">
    <location>
        <begin position="475"/>
        <end position="493"/>
    </location>
</feature>
<feature type="glycosylation site" description="N-linked (GlcNAc...) asparagine" evidence="2">
    <location>
        <position position="318"/>
    </location>
</feature>
<feature type="glycosylation site" description="N-linked (GlcNAc...) asparagine" evidence="2">
    <location>
        <position position="429"/>
    </location>
</feature>
<evidence type="ECO:0000250" key="1"/>
<evidence type="ECO:0000255" key="2"/>
<evidence type="ECO:0000305" key="3"/>
<name>PBN1_GIBZE</name>